<dbReference type="EMBL" id="CP000057">
    <property type="protein sequence ID" value="AAX87389.1"/>
    <property type="molecule type" value="Genomic_DNA"/>
</dbReference>
<dbReference type="RefSeq" id="WP_011271990.1">
    <property type="nucleotide sequence ID" value="NC_007146.2"/>
</dbReference>
<dbReference type="SMR" id="Q4QNK8"/>
<dbReference type="GeneID" id="93219281"/>
<dbReference type="KEGG" id="hit:NTHI0450"/>
<dbReference type="HOGENOM" id="CLU_066645_1_0_6"/>
<dbReference type="Proteomes" id="UP000002525">
    <property type="component" value="Chromosome"/>
</dbReference>
<dbReference type="GO" id="GO:0043590">
    <property type="term" value="C:bacterial nucleoid"/>
    <property type="evidence" value="ECO:0007669"/>
    <property type="project" value="TreeGrafter"/>
</dbReference>
<dbReference type="GO" id="GO:0006310">
    <property type="term" value="P:DNA recombination"/>
    <property type="evidence" value="ECO:0007669"/>
    <property type="project" value="UniProtKB-UniRule"/>
</dbReference>
<dbReference type="GO" id="GO:0006302">
    <property type="term" value="P:double-strand break repair"/>
    <property type="evidence" value="ECO:0007669"/>
    <property type="project" value="TreeGrafter"/>
</dbReference>
<dbReference type="Gene3D" id="2.40.50.140">
    <property type="entry name" value="Nucleic acid-binding proteins"/>
    <property type="match status" value="1"/>
</dbReference>
<dbReference type="Gene3D" id="1.20.1440.120">
    <property type="entry name" value="Recombination protein O, C-terminal domain"/>
    <property type="match status" value="1"/>
</dbReference>
<dbReference type="HAMAP" id="MF_00201">
    <property type="entry name" value="RecO"/>
    <property type="match status" value="1"/>
</dbReference>
<dbReference type="InterPro" id="IPR037278">
    <property type="entry name" value="ARFGAP/RecO"/>
</dbReference>
<dbReference type="InterPro" id="IPR022572">
    <property type="entry name" value="DNA_rep/recomb_RecO_N"/>
</dbReference>
<dbReference type="InterPro" id="IPR012340">
    <property type="entry name" value="NA-bd_OB-fold"/>
</dbReference>
<dbReference type="InterPro" id="IPR003717">
    <property type="entry name" value="RecO"/>
</dbReference>
<dbReference type="InterPro" id="IPR042242">
    <property type="entry name" value="RecO_C"/>
</dbReference>
<dbReference type="NCBIfam" id="TIGR00613">
    <property type="entry name" value="reco"/>
    <property type="match status" value="1"/>
</dbReference>
<dbReference type="PANTHER" id="PTHR33991">
    <property type="entry name" value="DNA REPAIR PROTEIN RECO"/>
    <property type="match status" value="1"/>
</dbReference>
<dbReference type="PANTHER" id="PTHR33991:SF1">
    <property type="entry name" value="DNA REPAIR PROTEIN RECO"/>
    <property type="match status" value="1"/>
</dbReference>
<dbReference type="Pfam" id="PF02565">
    <property type="entry name" value="RecO_C"/>
    <property type="match status" value="1"/>
</dbReference>
<dbReference type="Pfam" id="PF11967">
    <property type="entry name" value="RecO_N"/>
    <property type="match status" value="1"/>
</dbReference>
<dbReference type="SUPFAM" id="SSF57863">
    <property type="entry name" value="ArfGap/RecO-like zinc finger"/>
    <property type="match status" value="1"/>
</dbReference>
<dbReference type="SUPFAM" id="SSF50249">
    <property type="entry name" value="Nucleic acid-binding proteins"/>
    <property type="match status" value="1"/>
</dbReference>
<feature type="chain" id="PRO_0000227042" description="DNA repair protein RecO">
    <location>
        <begin position="1"/>
        <end position="236"/>
    </location>
</feature>
<comment type="function">
    <text evidence="1">Involved in DNA repair and RecF pathway recombination.</text>
</comment>
<comment type="similarity">
    <text evidence="1">Belongs to the RecO family.</text>
</comment>
<sequence>MQSELQRGFVLHRRPYSETSLLVDLFTEESGRLTVIAKGARAKRSSWKSVLQPFTPLLLRWTGKSTLKTLTKAEPAAITLPLQQIALYSGFYVNELLTRVIESETPNPALFQHYLKCLTGLATETNVEPTLRLFEFQLLQMLGYGVDFLHCAGSGEPVDFSMTYRYREEKGFVASLVKDNLTFYGRDLLAFEALDFSDDAVRQAAKRFTRIALKPYLGDKPLKSRELFTQNILLLK</sequence>
<reference key="1">
    <citation type="journal article" date="2005" name="J. Bacteriol.">
        <title>Genomic sequence of an otitis media isolate of nontypeable Haemophilus influenzae: comparative study with H. influenzae serotype d, strain KW20.</title>
        <authorList>
            <person name="Harrison A."/>
            <person name="Dyer D.W."/>
            <person name="Gillaspy A."/>
            <person name="Ray W.C."/>
            <person name="Mungur R."/>
            <person name="Carson M.B."/>
            <person name="Zhong H."/>
            <person name="Gipson J."/>
            <person name="Gipson M."/>
            <person name="Johnson L.S."/>
            <person name="Lewis L."/>
            <person name="Bakaletz L.O."/>
            <person name="Munson R.S. Jr."/>
        </authorList>
    </citation>
    <scope>NUCLEOTIDE SEQUENCE [LARGE SCALE GENOMIC DNA]</scope>
    <source>
        <strain>86-028NP</strain>
    </source>
</reference>
<gene>
    <name evidence="1" type="primary">recO</name>
    <name type="ordered locus">NTHI0450</name>
</gene>
<evidence type="ECO:0000255" key="1">
    <source>
        <dbReference type="HAMAP-Rule" id="MF_00201"/>
    </source>
</evidence>
<proteinExistence type="inferred from homology"/>
<protein>
    <recommendedName>
        <fullName evidence="1">DNA repair protein RecO</fullName>
    </recommendedName>
    <alternativeName>
        <fullName evidence="1">Recombination protein O</fullName>
    </alternativeName>
</protein>
<keyword id="KW-0227">DNA damage</keyword>
<keyword id="KW-0233">DNA recombination</keyword>
<keyword id="KW-0234">DNA repair</keyword>
<organism>
    <name type="scientific">Haemophilus influenzae (strain 86-028NP)</name>
    <dbReference type="NCBI Taxonomy" id="281310"/>
    <lineage>
        <taxon>Bacteria</taxon>
        <taxon>Pseudomonadati</taxon>
        <taxon>Pseudomonadota</taxon>
        <taxon>Gammaproteobacteria</taxon>
        <taxon>Pasteurellales</taxon>
        <taxon>Pasteurellaceae</taxon>
        <taxon>Haemophilus</taxon>
    </lineage>
</organism>
<accession>Q4QNK8</accession>
<name>RECO_HAEI8</name>